<reference key="1">
    <citation type="journal article" date="2002" name="Nature">
        <title>The genome sequence of Schizosaccharomyces pombe.</title>
        <authorList>
            <person name="Wood V."/>
            <person name="Gwilliam R."/>
            <person name="Rajandream M.A."/>
            <person name="Lyne M.H."/>
            <person name="Lyne R."/>
            <person name="Stewart A."/>
            <person name="Sgouros J.G."/>
            <person name="Peat N."/>
            <person name="Hayles J."/>
            <person name="Baker S.G."/>
            <person name="Basham D."/>
            <person name="Bowman S."/>
            <person name="Brooks K."/>
            <person name="Brown D."/>
            <person name="Brown S."/>
            <person name="Chillingworth T."/>
            <person name="Churcher C.M."/>
            <person name="Collins M."/>
            <person name="Connor R."/>
            <person name="Cronin A."/>
            <person name="Davis P."/>
            <person name="Feltwell T."/>
            <person name="Fraser A."/>
            <person name="Gentles S."/>
            <person name="Goble A."/>
            <person name="Hamlin N."/>
            <person name="Harris D.E."/>
            <person name="Hidalgo J."/>
            <person name="Hodgson G."/>
            <person name="Holroyd S."/>
            <person name="Hornsby T."/>
            <person name="Howarth S."/>
            <person name="Huckle E.J."/>
            <person name="Hunt S."/>
            <person name="Jagels K."/>
            <person name="James K.D."/>
            <person name="Jones L."/>
            <person name="Jones M."/>
            <person name="Leather S."/>
            <person name="McDonald S."/>
            <person name="McLean J."/>
            <person name="Mooney P."/>
            <person name="Moule S."/>
            <person name="Mungall K.L."/>
            <person name="Murphy L.D."/>
            <person name="Niblett D."/>
            <person name="Odell C."/>
            <person name="Oliver K."/>
            <person name="O'Neil S."/>
            <person name="Pearson D."/>
            <person name="Quail M.A."/>
            <person name="Rabbinowitsch E."/>
            <person name="Rutherford K.M."/>
            <person name="Rutter S."/>
            <person name="Saunders D."/>
            <person name="Seeger K."/>
            <person name="Sharp S."/>
            <person name="Skelton J."/>
            <person name="Simmonds M.N."/>
            <person name="Squares R."/>
            <person name="Squares S."/>
            <person name="Stevens K."/>
            <person name="Taylor K."/>
            <person name="Taylor R.G."/>
            <person name="Tivey A."/>
            <person name="Walsh S.V."/>
            <person name="Warren T."/>
            <person name="Whitehead S."/>
            <person name="Woodward J.R."/>
            <person name="Volckaert G."/>
            <person name="Aert R."/>
            <person name="Robben J."/>
            <person name="Grymonprez B."/>
            <person name="Weltjens I."/>
            <person name="Vanstreels E."/>
            <person name="Rieger M."/>
            <person name="Schaefer M."/>
            <person name="Mueller-Auer S."/>
            <person name="Gabel C."/>
            <person name="Fuchs M."/>
            <person name="Duesterhoeft A."/>
            <person name="Fritzc C."/>
            <person name="Holzer E."/>
            <person name="Moestl D."/>
            <person name="Hilbert H."/>
            <person name="Borzym K."/>
            <person name="Langer I."/>
            <person name="Beck A."/>
            <person name="Lehrach H."/>
            <person name="Reinhardt R."/>
            <person name="Pohl T.M."/>
            <person name="Eger P."/>
            <person name="Zimmermann W."/>
            <person name="Wedler H."/>
            <person name="Wambutt R."/>
            <person name="Purnelle B."/>
            <person name="Goffeau A."/>
            <person name="Cadieu E."/>
            <person name="Dreano S."/>
            <person name="Gloux S."/>
            <person name="Lelaure V."/>
            <person name="Mottier S."/>
            <person name="Galibert F."/>
            <person name="Aves S.J."/>
            <person name="Xiang Z."/>
            <person name="Hunt C."/>
            <person name="Moore K."/>
            <person name="Hurst S.M."/>
            <person name="Lucas M."/>
            <person name="Rochet M."/>
            <person name="Gaillardin C."/>
            <person name="Tallada V.A."/>
            <person name="Garzon A."/>
            <person name="Thode G."/>
            <person name="Daga R.R."/>
            <person name="Cruzado L."/>
            <person name="Jimenez J."/>
            <person name="Sanchez M."/>
            <person name="del Rey F."/>
            <person name="Benito J."/>
            <person name="Dominguez A."/>
            <person name="Revuelta J.L."/>
            <person name="Moreno S."/>
            <person name="Armstrong J."/>
            <person name="Forsburg S.L."/>
            <person name="Cerutti L."/>
            <person name="Lowe T."/>
            <person name="McCombie W.R."/>
            <person name="Paulsen I."/>
            <person name="Potashkin J."/>
            <person name="Shpakovski G.V."/>
            <person name="Ussery D."/>
            <person name="Barrell B.G."/>
            <person name="Nurse P."/>
        </authorList>
    </citation>
    <scope>NUCLEOTIDE SEQUENCE [LARGE SCALE GENOMIC DNA]</scope>
    <source>
        <strain>972 / ATCC 24843</strain>
    </source>
</reference>
<dbReference type="EMBL" id="CU329671">
    <property type="protein sequence ID" value="CAB94270.1"/>
    <property type="molecule type" value="Genomic_DNA"/>
</dbReference>
<dbReference type="BioGRID" id="279384">
    <property type="interactions" value="61"/>
</dbReference>
<dbReference type="STRING" id="284812.Q9P3V7"/>
<dbReference type="PaxDb" id="4896-SPBC1348.03.1"/>
<dbReference type="EnsemblFungi" id="SPBC1348.03.1">
    <property type="protein sequence ID" value="SPBC1348.03.1:pep"/>
    <property type="gene ID" value="SPBC1348.03"/>
</dbReference>
<dbReference type="KEGG" id="spo:2542943"/>
<dbReference type="PomBase" id="SPBC1348.03"/>
<dbReference type="VEuPathDB" id="FungiDB:SPBC1348.03"/>
<dbReference type="HOGENOM" id="CLU_1778552_0_0_1"/>
<dbReference type="InParanoid" id="Q9P3V7"/>
<dbReference type="PhylomeDB" id="Q9P3V7"/>
<dbReference type="PRO" id="PR:Q9P3V7"/>
<dbReference type="Proteomes" id="UP000002485">
    <property type="component" value="Chromosome II"/>
</dbReference>
<dbReference type="GO" id="GO:0005737">
    <property type="term" value="C:cytoplasm"/>
    <property type="evidence" value="ECO:0007669"/>
    <property type="project" value="UniProtKB-SubCell"/>
</dbReference>
<dbReference type="GO" id="GO:0031965">
    <property type="term" value="C:nuclear membrane"/>
    <property type="evidence" value="ECO:0007669"/>
    <property type="project" value="UniProtKB-SubCell"/>
</dbReference>
<dbReference type="InterPro" id="IPR018291">
    <property type="entry name" value="5TM-prot_SCHPO"/>
</dbReference>
<dbReference type="Pfam" id="PF09437">
    <property type="entry name" value="Pombe_5TM"/>
    <property type="match status" value="2"/>
</dbReference>
<feature type="chain" id="PRO_0000373863" description="UPF0742 protein C1348.03">
    <location>
        <begin position="1"/>
        <end position="146"/>
    </location>
</feature>
<feature type="transmembrane region" description="Helical" evidence="2">
    <location>
        <begin position="38"/>
        <end position="60"/>
    </location>
</feature>
<gene>
    <name type="ORF">SPBC1348.03</name>
</gene>
<name>YI43_SCHPO</name>
<proteinExistence type="inferred from homology"/>
<protein>
    <recommendedName>
        <fullName>UPF0742 protein C1348.03</fullName>
    </recommendedName>
</protein>
<organism>
    <name type="scientific">Schizosaccharomyces pombe (strain 972 / ATCC 24843)</name>
    <name type="common">Fission yeast</name>
    <dbReference type="NCBI Taxonomy" id="284812"/>
    <lineage>
        <taxon>Eukaryota</taxon>
        <taxon>Fungi</taxon>
        <taxon>Dikarya</taxon>
        <taxon>Ascomycota</taxon>
        <taxon>Taphrinomycotina</taxon>
        <taxon>Schizosaccharomycetes</taxon>
        <taxon>Schizosaccharomycetales</taxon>
        <taxon>Schizosaccharomycetaceae</taxon>
        <taxon>Schizosaccharomyces</taxon>
    </lineage>
</organism>
<keyword id="KW-0963">Cytoplasm</keyword>
<keyword id="KW-0472">Membrane</keyword>
<keyword id="KW-0539">Nucleus</keyword>
<keyword id="KW-1185">Reference proteome</keyword>
<keyword id="KW-0812">Transmembrane</keyword>
<keyword id="KW-1133">Transmembrane helix</keyword>
<comment type="subcellular location">
    <subcellularLocation>
        <location evidence="1">Cytoplasm</location>
    </subcellularLocation>
    <subcellularLocation>
        <location evidence="1">Nucleus membrane</location>
        <topology evidence="1">Single-pass membrane protein</topology>
    </subcellularLocation>
    <text evidence="1">Localizes to cytoplasmic dots and the nuclear envelope.</text>
</comment>
<comment type="similarity">
    <text evidence="3">Belongs to the UPF0742 family.</text>
</comment>
<evidence type="ECO:0000250" key="1"/>
<evidence type="ECO:0000255" key="2"/>
<evidence type="ECO:0000305" key="3"/>
<sequence>MALLKKINTQVNRIMKNSSLVQNICFDRVPLFIPRLSLTVKYCLAVKLLIYLLYCWYIYSEVPSASSKFRSFTFGCVVVYHNKFFPRFIRTHSINSIRTFSKFQVIILFSIEKVTRSESKNHSYSKTDISDLHQGYNNPPSRFISQ</sequence>
<accession>Q9P3V7</accession>